<comment type="similarity">
    <text evidence="4">Belongs to the GDAP2 family.</text>
</comment>
<name>GDAP2_DROPS</name>
<evidence type="ECO:0000255" key="1">
    <source>
        <dbReference type="PROSITE-ProRule" id="PRU00056"/>
    </source>
</evidence>
<evidence type="ECO:0000255" key="2">
    <source>
        <dbReference type="PROSITE-ProRule" id="PRU00490"/>
    </source>
</evidence>
<evidence type="ECO:0000256" key="3">
    <source>
        <dbReference type="SAM" id="MobiDB-lite"/>
    </source>
</evidence>
<evidence type="ECO:0000305" key="4"/>
<dbReference type="EMBL" id="CM000071">
    <property type="protein sequence ID" value="EAL24903.1"/>
    <property type="molecule type" value="Genomic_DNA"/>
</dbReference>
<dbReference type="RefSeq" id="XP_001360328.1">
    <property type="nucleotide sequence ID" value="XM_001360291.3"/>
</dbReference>
<dbReference type="SMR" id="Q292F9"/>
<dbReference type="FunCoup" id="Q292F9">
    <property type="interactions" value="1529"/>
</dbReference>
<dbReference type="STRING" id="46245.Q292F9"/>
<dbReference type="EnsemblMetazoa" id="FBtr0278990">
    <property type="protein sequence ID" value="FBpp0277428"/>
    <property type="gene ID" value="FBgn0075116"/>
</dbReference>
<dbReference type="KEGG" id="dpo:4803643"/>
<dbReference type="CTD" id="54834"/>
<dbReference type="eggNOG" id="KOG2633">
    <property type="taxonomic scope" value="Eukaryota"/>
</dbReference>
<dbReference type="HOGENOM" id="CLU_026877_0_0_1"/>
<dbReference type="InParanoid" id="Q292F9"/>
<dbReference type="OMA" id="IHPTFWT"/>
<dbReference type="PhylomeDB" id="Q292F9"/>
<dbReference type="Proteomes" id="UP000001819">
    <property type="component" value="Chromosome 3"/>
</dbReference>
<dbReference type="Bgee" id="FBgn0075116">
    <property type="expression patterns" value="Expressed in insect adult head and 2 other cell types or tissues"/>
</dbReference>
<dbReference type="CDD" id="cd02905">
    <property type="entry name" value="Macro_GDAP2-like"/>
    <property type="match status" value="1"/>
</dbReference>
<dbReference type="CDD" id="cd00170">
    <property type="entry name" value="SEC14"/>
    <property type="match status" value="1"/>
</dbReference>
<dbReference type="Gene3D" id="3.40.525.10">
    <property type="entry name" value="CRAL-TRIO lipid binding domain"/>
    <property type="match status" value="1"/>
</dbReference>
<dbReference type="Gene3D" id="3.40.220.10">
    <property type="entry name" value="Leucine Aminopeptidase, subunit E, domain 1"/>
    <property type="match status" value="1"/>
</dbReference>
<dbReference type="InterPro" id="IPR001251">
    <property type="entry name" value="CRAL-TRIO_dom"/>
</dbReference>
<dbReference type="InterPro" id="IPR036865">
    <property type="entry name" value="CRAL-TRIO_dom_sf"/>
</dbReference>
<dbReference type="InterPro" id="IPR002589">
    <property type="entry name" value="Macro_dom"/>
</dbReference>
<dbReference type="InterPro" id="IPR043472">
    <property type="entry name" value="Macro_dom-like"/>
</dbReference>
<dbReference type="InterPro" id="IPR035793">
    <property type="entry name" value="Macro_GDAP2"/>
</dbReference>
<dbReference type="PANTHER" id="PTHR11106">
    <property type="entry name" value="GANGLIOSIDE INDUCED DIFFERENTIATION ASSOCIATED PROTEIN 2-RELATED"/>
    <property type="match status" value="1"/>
</dbReference>
<dbReference type="PANTHER" id="PTHR11106:SF72">
    <property type="entry name" value="GANGLIOSIDE-INDUCED DIFFERENTIATION-ASSOCIATED PROTEIN 2"/>
    <property type="match status" value="1"/>
</dbReference>
<dbReference type="Pfam" id="PF13716">
    <property type="entry name" value="CRAL_TRIO_2"/>
    <property type="match status" value="1"/>
</dbReference>
<dbReference type="Pfam" id="PF01661">
    <property type="entry name" value="Macro"/>
    <property type="match status" value="1"/>
</dbReference>
<dbReference type="SMART" id="SM00506">
    <property type="entry name" value="A1pp"/>
    <property type="match status" value="1"/>
</dbReference>
<dbReference type="SMART" id="SM00516">
    <property type="entry name" value="SEC14"/>
    <property type="match status" value="1"/>
</dbReference>
<dbReference type="SUPFAM" id="SSF52087">
    <property type="entry name" value="CRAL/TRIO domain"/>
    <property type="match status" value="1"/>
</dbReference>
<dbReference type="SUPFAM" id="SSF52949">
    <property type="entry name" value="Macro domain-like"/>
    <property type="match status" value="1"/>
</dbReference>
<dbReference type="PROSITE" id="PS50191">
    <property type="entry name" value="CRAL_TRIO"/>
    <property type="match status" value="1"/>
</dbReference>
<dbReference type="PROSITE" id="PS51154">
    <property type="entry name" value="MACRO"/>
    <property type="match status" value="1"/>
</dbReference>
<keyword id="KW-1185">Reference proteome</keyword>
<protein>
    <recommendedName>
        <fullName>Protein GDAP2 homolog</fullName>
    </recommendedName>
</protein>
<proteinExistence type="inferred from homology"/>
<organism>
    <name type="scientific">Drosophila pseudoobscura pseudoobscura</name>
    <name type="common">Fruit fly</name>
    <dbReference type="NCBI Taxonomy" id="46245"/>
    <lineage>
        <taxon>Eukaryota</taxon>
        <taxon>Metazoa</taxon>
        <taxon>Ecdysozoa</taxon>
        <taxon>Arthropoda</taxon>
        <taxon>Hexapoda</taxon>
        <taxon>Insecta</taxon>
        <taxon>Pterygota</taxon>
        <taxon>Neoptera</taxon>
        <taxon>Endopterygota</taxon>
        <taxon>Diptera</taxon>
        <taxon>Brachycera</taxon>
        <taxon>Muscomorpha</taxon>
        <taxon>Ephydroidea</taxon>
        <taxon>Drosophilidae</taxon>
        <taxon>Drosophila</taxon>
        <taxon>Sophophora</taxon>
    </lineage>
</organism>
<sequence>MRLDTNSNVDFKAFESSSSSSSCLVKLDNLATWGGSQKTDTRLPITDYSTLGGPRHNRSPFPLSKDVNNRLVIWDGDMTTLDVDAITNTSDETLTESNIISERILAVAGNQLREELSTNVKECRTGDVRITRGYNLPAKYVLHTVAPTYREKFKTAAENTLHCCYRNVLCKAKELNLHTIALCNISVHQKSFPADVAAHIALRTIRRYLDKCTLQVVILCVNSNERGTYEVLAPLYFPRDQLEERSALWQLPKDIGGEFGEPQHPDPDRQIRIIRNPQHSVHMRHGHTDDDSDVSPHDMEGNSSDLEYGAKDMNGLSPNSYSSGLQTQLQRDLDRQHLLSDRPRAGVYENVISEGVEGIEHQERYERLLRRAQVEDLTEVSGIGCLYQSGVDRLGRPVIVFCGKWFPAQNIDLEKALLYLIKLLDPIVKGDYVISYFHTLTSTNNYPSLHWLREVYSVLPYKYKKNLKAFYIVHPTFWTKMMTWWFTTFMAPAIKAKVHSLPGVEHLYSAITKDQLEIPAYITEYDMATNGLHYFNPVPTAS</sequence>
<gene>
    <name type="ORF">GA15091</name>
</gene>
<accession>Q292F9</accession>
<feature type="chain" id="PRO_0000331402" description="Protein GDAP2 homolog">
    <location>
        <begin position="1"/>
        <end position="542"/>
    </location>
</feature>
<feature type="domain" description="Macro" evidence="2">
    <location>
        <begin position="58"/>
        <end position="237"/>
    </location>
</feature>
<feature type="domain" description="CRAL-TRIO" evidence="1">
    <location>
        <begin position="373"/>
        <end position="530"/>
    </location>
</feature>
<feature type="region of interest" description="Disordered" evidence="3">
    <location>
        <begin position="277"/>
        <end position="304"/>
    </location>
</feature>
<feature type="compositionally biased region" description="Basic and acidic residues" evidence="3">
    <location>
        <begin position="286"/>
        <end position="300"/>
    </location>
</feature>
<reference key="1">
    <citation type="journal article" date="2005" name="Genome Res.">
        <title>Comparative genome sequencing of Drosophila pseudoobscura: chromosomal, gene, and cis-element evolution.</title>
        <authorList>
            <person name="Richards S."/>
            <person name="Liu Y."/>
            <person name="Bettencourt B.R."/>
            <person name="Hradecky P."/>
            <person name="Letovsky S."/>
            <person name="Nielsen R."/>
            <person name="Thornton K."/>
            <person name="Hubisz M.J."/>
            <person name="Chen R."/>
            <person name="Meisel R.P."/>
            <person name="Couronne O."/>
            <person name="Hua S."/>
            <person name="Smith M.A."/>
            <person name="Zhang P."/>
            <person name="Liu J."/>
            <person name="Bussemaker H.J."/>
            <person name="van Batenburg M.F."/>
            <person name="Howells S.L."/>
            <person name="Scherer S.E."/>
            <person name="Sodergren E."/>
            <person name="Matthews B.B."/>
            <person name="Crosby M.A."/>
            <person name="Schroeder A.J."/>
            <person name="Ortiz-Barrientos D."/>
            <person name="Rives C.M."/>
            <person name="Metzker M.L."/>
            <person name="Muzny D.M."/>
            <person name="Scott G."/>
            <person name="Steffen D."/>
            <person name="Wheeler D.A."/>
            <person name="Worley K.C."/>
            <person name="Havlak P."/>
            <person name="Durbin K.J."/>
            <person name="Egan A."/>
            <person name="Gill R."/>
            <person name="Hume J."/>
            <person name="Morgan M.B."/>
            <person name="Miner G."/>
            <person name="Hamilton C."/>
            <person name="Huang Y."/>
            <person name="Waldron L."/>
            <person name="Verduzco D."/>
            <person name="Clerc-Blankenburg K.P."/>
            <person name="Dubchak I."/>
            <person name="Noor M.A.F."/>
            <person name="Anderson W."/>
            <person name="White K.P."/>
            <person name="Clark A.G."/>
            <person name="Schaeffer S.W."/>
            <person name="Gelbart W.M."/>
            <person name="Weinstock G.M."/>
            <person name="Gibbs R.A."/>
        </authorList>
    </citation>
    <scope>NUCLEOTIDE SEQUENCE [LARGE SCALE GENOMIC DNA]</scope>
    <source>
        <strain>MV2-25 / Tucson 14011-0121.94</strain>
    </source>
</reference>